<dbReference type="EC" id="2.8.1.13" evidence="1"/>
<dbReference type="EMBL" id="CP001197">
    <property type="protein sequence ID" value="ACL09777.1"/>
    <property type="molecule type" value="Genomic_DNA"/>
</dbReference>
<dbReference type="SMR" id="B8DRE0"/>
<dbReference type="STRING" id="883.DvMF_2839"/>
<dbReference type="KEGG" id="dvm:DvMF_2839"/>
<dbReference type="eggNOG" id="COG0482">
    <property type="taxonomic scope" value="Bacteria"/>
</dbReference>
<dbReference type="HOGENOM" id="CLU_035188_0_0_7"/>
<dbReference type="OrthoDB" id="9800696at2"/>
<dbReference type="GO" id="GO:0005737">
    <property type="term" value="C:cytoplasm"/>
    <property type="evidence" value="ECO:0007669"/>
    <property type="project" value="UniProtKB-SubCell"/>
</dbReference>
<dbReference type="GO" id="GO:0005524">
    <property type="term" value="F:ATP binding"/>
    <property type="evidence" value="ECO:0007669"/>
    <property type="project" value="UniProtKB-KW"/>
</dbReference>
<dbReference type="GO" id="GO:0000049">
    <property type="term" value="F:tRNA binding"/>
    <property type="evidence" value="ECO:0007669"/>
    <property type="project" value="UniProtKB-KW"/>
</dbReference>
<dbReference type="GO" id="GO:0103016">
    <property type="term" value="F:tRNA-uridine 2-sulfurtransferase activity"/>
    <property type="evidence" value="ECO:0007669"/>
    <property type="project" value="UniProtKB-EC"/>
</dbReference>
<dbReference type="GO" id="GO:0002143">
    <property type="term" value="P:tRNA wobble position uridine thiolation"/>
    <property type="evidence" value="ECO:0007669"/>
    <property type="project" value="TreeGrafter"/>
</dbReference>
<dbReference type="CDD" id="cd01998">
    <property type="entry name" value="MnmA_TRMU-like"/>
    <property type="match status" value="1"/>
</dbReference>
<dbReference type="FunFam" id="2.30.30.280:FF:000001">
    <property type="entry name" value="tRNA-specific 2-thiouridylase MnmA"/>
    <property type="match status" value="1"/>
</dbReference>
<dbReference type="Gene3D" id="2.30.30.280">
    <property type="entry name" value="Adenine nucleotide alpha hydrolases-like domains"/>
    <property type="match status" value="1"/>
</dbReference>
<dbReference type="Gene3D" id="3.40.50.620">
    <property type="entry name" value="HUPs"/>
    <property type="match status" value="1"/>
</dbReference>
<dbReference type="Gene3D" id="2.40.30.10">
    <property type="entry name" value="Translation factors"/>
    <property type="match status" value="1"/>
</dbReference>
<dbReference type="HAMAP" id="MF_00144">
    <property type="entry name" value="tRNA_thiouridyl_MnmA"/>
    <property type="match status" value="1"/>
</dbReference>
<dbReference type="InterPro" id="IPR004506">
    <property type="entry name" value="MnmA-like"/>
</dbReference>
<dbReference type="InterPro" id="IPR046885">
    <property type="entry name" value="MnmA-like_C"/>
</dbReference>
<dbReference type="InterPro" id="IPR046884">
    <property type="entry name" value="MnmA-like_central"/>
</dbReference>
<dbReference type="InterPro" id="IPR023382">
    <property type="entry name" value="MnmA-like_central_sf"/>
</dbReference>
<dbReference type="InterPro" id="IPR014729">
    <property type="entry name" value="Rossmann-like_a/b/a_fold"/>
</dbReference>
<dbReference type="NCBIfam" id="NF001138">
    <property type="entry name" value="PRK00143.1"/>
    <property type="match status" value="1"/>
</dbReference>
<dbReference type="NCBIfam" id="TIGR00420">
    <property type="entry name" value="trmU"/>
    <property type="match status" value="1"/>
</dbReference>
<dbReference type="PANTHER" id="PTHR11933:SF5">
    <property type="entry name" value="MITOCHONDRIAL TRNA-SPECIFIC 2-THIOURIDYLASE 1"/>
    <property type="match status" value="1"/>
</dbReference>
<dbReference type="PANTHER" id="PTHR11933">
    <property type="entry name" value="TRNA 5-METHYLAMINOMETHYL-2-THIOURIDYLATE -METHYLTRANSFERASE"/>
    <property type="match status" value="1"/>
</dbReference>
<dbReference type="Pfam" id="PF03054">
    <property type="entry name" value="tRNA_Me_trans"/>
    <property type="match status" value="1"/>
</dbReference>
<dbReference type="Pfam" id="PF20258">
    <property type="entry name" value="tRNA_Me_trans_C"/>
    <property type="match status" value="1"/>
</dbReference>
<dbReference type="Pfam" id="PF20259">
    <property type="entry name" value="tRNA_Me_trans_M"/>
    <property type="match status" value="1"/>
</dbReference>
<dbReference type="SUPFAM" id="SSF52402">
    <property type="entry name" value="Adenine nucleotide alpha hydrolases-like"/>
    <property type="match status" value="1"/>
</dbReference>
<sequence length="351" mass="38379">MKIAVALSGGTDSLFALLLLLEQGQDVFGLHARFLPPRADQPSGNPDPAEAIGAMCARLGVDFHAVDLADAFEEAVVAPFIEEYVVGRTPNPCARCNATMKFGLLLDAARALGAARLATGHYVRQLRHPQWGMTLQRGADPAKDQSYFLSLVDRARLEQAVFPLGNWRKEQVKAELVKRNIVPPLPSESQEICFVPGDDYRAFLRDRQVRLPGPGPIVTMRGRKIGSHKGLWQYTEGQRRGLGIAWEEPLYVVSKDMENNVLLVGGREHLAARGCLTEDVNLLVDPADWPAEISVRTRYRQAPQPARVTVGDTGMAVRFREPQTPPARGQVAAVYDAEGHVLAGGVILGPV</sequence>
<keyword id="KW-0067">ATP-binding</keyword>
<keyword id="KW-0963">Cytoplasm</keyword>
<keyword id="KW-1015">Disulfide bond</keyword>
<keyword id="KW-0547">Nucleotide-binding</keyword>
<keyword id="KW-0694">RNA-binding</keyword>
<keyword id="KW-0808">Transferase</keyword>
<keyword id="KW-0819">tRNA processing</keyword>
<keyword id="KW-0820">tRNA-binding</keyword>
<comment type="function">
    <text evidence="1">Catalyzes the 2-thiolation of uridine at the wobble position (U34) of tRNA, leading to the formation of s(2)U34.</text>
</comment>
<comment type="catalytic activity">
    <reaction evidence="1">
        <text>S-sulfanyl-L-cysteinyl-[protein] + uridine(34) in tRNA + AH2 + ATP = 2-thiouridine(34) in tRNA + L-cysteinyl-[protein] + A + AMP + diphosphate + H(+)</text>
        <dbReference type="Rhea" id="RHEA:47032"/>
        <dbReference type="Rhea" id="RHEA-COMP:10131"/>
        <dbReference type="Rhea" id="RHEA-COMP:11726"/>
        <dbReference type="Rhea" id="RHEA-COMP:11727"/>
        <dbReference type="Rhea" id="RHEA-COMP:11728"/>
        <dbReference type="ChEBI" id="CHEBI:13193"/>
        <dbReference type="ChEBI" id="CHEBI:15378"/>
        <dbReference type="ChEBI" id="CHEBI:17499"/>
        <dbReference type="ChEBI" id="CHEBI:29950"/>
        <dbReference type="ChEBI" id="CHEBI:30616"/>
        <dbReference type="ChEBI" id="CHEBI:33019"/>
        <dbReference type="ChEBI" id="CHEBI:61963"/>
        <dbReference type="ChEBI" id="CHEBI:65315"/>
        <dbReference type="ChEBI" id="CHEBI:87170"/>
        <dbReference type="ChEBI" id="CHEBI:456215"/>
        <dbReference type="EC" id="2.8.1.13"/>
    </reaction>
</comment>
<comment type="subcellular location">
    <subcellularLocation>
        <location evidence="1">Cytoplasm</location>
    </subcellularLocation>
</comment>
<comment type="similarity">
    <text evidence="1">Belongs to the MnmA/TRMU family.</text>
</comment>
<organism>
    <name type="scientific">Nitratidesulfovibrio vulgaris (strain DSM 19637 / Miyazaki F)</name>
    <name type="common">Desulfovibrio vulgaris</name>
    <dbReference type="NCBI Taxonomy" id="883"/>
    <lineage>
        <taxon>Bacteria</taxon>
        <taxon>Pseudomonadati</taxon>
        <taxon>Thermodesulfobacteriota</taxon>
        <taxon>Desulfovibrionia</taxon>
        <taxon>Desulfovibrionales</taxon>
        <taxon>Desulfovibrionaceae</taxon>
        <taxon>Nitratidesulfovibrio</taxon>
    </lineage>
</organism>
<accession>B8DRE0</accession>
<protein>
    <recommendedName>
        <fullName evidence="1">tRNA-specific 2-thiouridylase MnmA</fullName>
        <ecNumber evidence="1">2.8.1.13</ecNumber>
    </recommendedName>
</protein>
<reference key="1">
    <citation type="submission" date="2008-10" db="EMBL/GenBank/DDBJ databases">
        <title>Complete sequence of Desulfovibrio vulgaris str. 'Miyazaki F'.</title>
        <authorList>
            <person name="Lucas S."/>
            <person name="Copeland A."/>
            <person name="Lapidus A."/>
            <person name="Glavina del Rio T."/>
            <person name="Dalin E."/>
            <person name="Tice H."/>
            <person name="Bruce D."/>
            <person name="Goodwin L."/>
            <person name="Pitluck S."/>
            <person name="Sims D."/>
            <person name="Brettin T."/>
            <person name="Detter J.C."/>
            <person name="Han C."/>
            <person name="Larimer F."/>
            <person name="Land M."/>
            <person name="Hauser L."/>
            <person name="Kyrpides N."/>
            <person name="Mikhailova N."/>
            <person name="Hazen T.C."/>
            <person name="Richardson P."/>
        </authorList>
    </citation>
    <scope>NUCLEOTIDE SEQUENCE [LARGE SCALE GENOMIC DNA]</scope>
    <source>
        <strain>DSM 19637 / Miyazaki F</strain>
    </source>
</reference>
<gene>
    <name evidence="1" type="primary">mnmA</name>
    <name type="ordered locus">DvMF_2839</name>
</gene>
<evidence type="ECO:0000255" key="1">
    <source>
        <dbReference type="HAMAP-Rule" id="MF_00144"/>
    </source>
</evidence>
<proteinExistence type="inferred from homology"/>
<feature type="chain" id="PRO_1000198610" description="tRNA-specific 2-thiouridylase MnmA">
    <location>
        <begin position="1"/>
        <end position="351"/>
    </location>
</feature>
<feature type="region of interest" description="Interaction with tRNA" evidence="1">
    <location>
        <begin position="143"/>
        <end position="145"/>
    </location>
</feature>
<feature type="region of interest" description="Interaction with tRNA" evidence="1">
    <location>
        <begin position="298"/>
        <end position="299"/>
    </location>
</feature>
<feature type="active site" description="Nucleophile" evidence="1">
    <location>
        <position position="96"/>
    </location>
</feature>
<feature type="active site" description="Cysteine persulfide intermediate" evidence="1">
    <location>
        <position position="193"/>
    </location>
</feature>
<feature type="binding site" evidence="1">
    <location>
        <begin position="6"/>
        <end position="13"/>
    </location>
    <ligand>
        <name>ATP</name>
        <dbReference type="ChEBI" id="CHEBI:30616"/>
    </ligand>
</feature>
<feature type="binding site" evidence="1">
    <location>
        <position position="120"/>
    </location>
    <ligand>
        <name>ATP</name>
        <dbReference type="ChEBI" id="CHEBI:30616"/>
    </ligand>
</feature>
<feature type="site" description="Interaction with tRNA" evidence="1">
    <location>
        <position position="121"/>
    </location>
</feature>
<feature type="site" description="Interaction with tRNA" evidence="1">
    <location>
        <position position="330"/>
    </location>
</feature>
<feature type="disulfide bond" description="Alternate" evidence="1">
    <location>
        <begin position="96"/>
        <end position="193"/>
    </location>
</feature>
<name>MNMA_NITV9</name>